<protein>
    <recommendedName>
        <fullName evidence="1">Alanine--tRNA ligase</fullName>
        <ecNumber evidence="1">6.1.1.7</ecNumber>
    </recommendedName>
    <alternativeName>
        <fullName evidence="1">Alanyl-tRNA synthetase</fullName>
        <shortName evidence="1">AlaRS</shortName>
    </alternativeName>
</protein>
<accession>A5ITE3</accession>
<evidence type="ECO:0000255" key="1">
    <source>
        <dbReference type="HAMAP-Rule" id="MF_00036"/>
    </source>
</evidence>
<dbReference type="EC" id="6.1.1.7" evidence="1"/>
<dbReference type="EMBL" id="CP000703">
    <property type="protein sequence ID" value="ABQ49466.1"/>
    <property type="molecule type" value="Genomic_DNA"/>
</dbReference>
<dbReference type="RefSeq" id="WP_000734075.1">
    <property type="nucleotide sequence ID" value="NC_009487.1"/>
</dbReference>
<dbReference type="SMR" id="A5ITE3"/>
<dbReference type="KEGG" id="saj:SaurJH9_1675"/>
<dbReference type="HOGENOM" id="CLU_004485_1_1_9"/>
<dbReference type="GO" id="GO:0005829">
    <property type="term" value="C:cytosol"/>
    <property type="evidence" value="ECO:0007669"/>
    <property type="project" value="TreeGrafter"/>
</dbReference>
<dbReference type="GO" id="GO:0004813">
    <property type="term" value="F:alanine-tRNA ligase activity"/>
    <property type="evidence" value="ECO:0007669"/>
    <property type="project" value="UniProtKB-UniRule"/>
</dbReference>
<dbReference type="GO" id="GO:0002161">
    <property type="term" value="F:aminoacyl-tRNA deacylase activity"/>
    <property type="evidence" value="ECO:0007669"/>
    <property type="project" value="TreeGrafter"/>
</dbReference>
<dbReference type="GO" id="GO:0005524">
    <property type="term" value="F:ATP binding"/>
    <property type="evidence" value="ECO:0007669"/>
    <property type="project" value="UniProtKB-UniRule"/>
</dbReference>
<dbReference type="GO" id="GO:0140096">
    <property type="term" value="F:catalytic activity, acting on a protein"/>
    <property type="evidence" value="ECO:0007669"/>
    <property type="project" value="UniProtKB-ARBA"/>
</dbReference>
<dbReference type="GO" id="GO:0016740">
    <property type="term" value="F:transferase activity"/>
    <property type="evidence" value="ECO:0007669"/>
    <property type="project" value="UniProtKB-ARBA"/>
</dbReference>
<dbReference type="GO" id="GO:0000049">
    <property type="term" value="F:tRNA binding"/>
    <property type="evidence" value="ECO:0007669"/>
    <property type="project" value="UniProtKB-KW"/>
</dbReference>
<dbReference type="GO" id="GO:0008270">
    <property type="term" value="F:zinc ion binding"/>
    <property type="evidence" value="ECO:0007669"/>
    <property type="project" value="UniProtKB-UniRule"/>
</dbReference>
<dbReference type="GO" id="GO:0006419">
    <property type="term" value="P:alanyl-tRNA aminoacylation"/>
    <property type="evidence" value="ECO:0007669"/>
    <property type="project" value="UniProtKB-UniRule"/>
</dbReference>
<dbReference type="CDD" id="cd00673">
    <property type="entry name" value="AlaRS_core"/>
    <property type="match status" value="1"/>
</dbReference>
<dbReference type="FunFam" id="2.40.30.130:FF:000001">
    <property type="entry name" value="Alanine--tRNA ligase"/>
    <property type="match status" value="1"/>
</dbReference>
<dbReference type="FunFam" id="3.10.310.40:FF:000001">
    <property type="entry name" value="Alanine--tRNA ligase"/>
    <property type="match status" value="1"/>
</dbReference>
<dbReference type="FunFam" id="3.30.54.20:FF:000001">
    <property type="entry name" value="Alanine--tRNA ligase"/>
    <property type="match status" value="1"/>
</dbReference>
<dbReference type="FunFam" id="3.30.930.10:FF:000046">
    <property type="entry name" value="Alanine--tRNA ligase"/>
    <property type="match status" value="1"/>
</dbReference>
<dbReference type="FunFam" id="3.30.980.10:FF:000004">
    <property type="entry name" value="Alanine--tRNA ligase, cytoplasmic"/>
    <property type="match status" value="1"/>
</dbReference>
<dbReference type="Gene3D" id="2.40.30.130">
    <property type="match status" value="1"/>
</dbReference>
<dbReference type="Gene3D" id="3.10.310.40">
    <property type="match status" value="1"/>
</dbReference>
<dbReference type="Gene3D" id="3.30.54.20">
    <property type="match status" value="1"/>
</dbReference>
<dbReference type="Gene3D" id="3.30.930.10">
    <property type="entry name" value="Bira Bifunctional Protein, Domain 2"/>
    <property type="match status" value="1"/>
</dbReference>
<dbReference type="Gene3D" id="3.30.980.10">
    <property type="entry name" value="Threonyl-trna Synthetase, Chain A, domain 2"/>
    <property type="match status" value="1"/>
</dbReference>
<dbReference type="HAMAP" id="MF_00036_B">
    <property type="entry name" value="Ala_tRNA_synth_B"/>
    <property type="match status" value="1"/>
</dbReference>
<dbReference type="InterPro" id="IPR045864">
    <property type="entry name" value="aa-tRNA-synth_II/BPL/LPL"/>
</dbReference>
<dbReference type="InterPro" id="IPR002318">
    <property type="entry name" value="Ala-tRNA-lgiase_IIc"/>
</dbReference>
<dbReference type="InterPro" id="IPR018162">
    <property type="entry name" value="Ala-tRNA-ligase_IIc_anticod-bd"/>
</dbReference>
<dbReference type="InterPro" id="IPR018165">
    <property type="entry name" value="Ala-tRNA-synth_IIc_core"/>
</dbReference>
<dbReference type="InterPro" id="IPR018164">
    <property type="entry name" value="Ala-tRNA-synth_IIc_N"/>
</dbReference>
<dbReference type="InterPro" id="IPR050058">
    <property type="entry name" value="Ala-tRNA_ligase"/>
</dbReference>
<dbReference type="InterPro" id="IPR023033">
    <property type="entry name" value="Ala_tRNA_ligase_euk/bac"/>
</dbReference>
<dbReference type="InterPro" id="IPR003156">
    <property type="entry name" value="DHHA1_dom"/>
</dbReference>
<dbReference type="InterPro" id="IPR018163">
    <property type="entry name" value="Thr/Ala-tRNA-synth_IIc_edit"/>
</dbReference>
<dbReference type="InterPro" id="IPR009000">
    <property type="entry name" value="Transl_B-barrel_sf"/>
</dbReference>
<dbReference type="InterPro" id="IPR012947">
    <property type="entry name" value="tRNA_SAD"/>
</dbReference>
<dbReference type="NCBIfam" id="TIGR00344">
    <property type="entry name" value="alaS"/>
    <property type="match status" value="1"/>
</dbReference>
<dbReference type="PANTHER" id="PTHR11777:SF9">
    <property type="entry name" value="ALANINE--TRNA LIGASE, CYTOPLASMIC"/>
    <property type="match status" value="1"/>
</dbReference>
<dbReference type="PANTHER" id="PTHR11777">
    <property type="entry name" value="ALANYL-TRNA SYNTHETASE"/>
    <property type="match status" value="1"/>
</dbReference>
<dbReference type="Pfam" id="PF02272">
    <property type="entry name" value="DHHA1"/>
    <property type="match status" value="1"/>
</dbReference>
<dbReference type="Pfam" id="PF01411">
    <property type="entry name" value="tRNA-synt_2c"/>
    <property type="match status" value="1"/>
</dbReference>
<dbReference type="Pfam" id="PF07973">
    <property type="entry name" value="tRNA_SAD"/>
    <property type="match status" value="1"/>
</dbReference>
<dbReference type="PRINTS" id="PR00980">
    <property type="entry name" value="TRNASYNTHALA"/>
</dbReference>
<dbReference type="SMART" id="SM00863">
    <property type="entry name" value="tRNA_SAD"/>
    <property type="match status" value="1"/>
</dbReference>
<dbReference type="SUPFAM" id="SSF55681">
    <property type="entry name" value="Class II aaRS and biotin synthetases"/>
    <property type="match status" value="1"/>
</dbReference>
<dbReference type="SUPFAM" id="SSF101353">
    <property type="entry name" value="Putative anticodon-binding domain of alanyl-tRNA synthetase (AlaRS)"/>
    <property type="match status" value="1"/>
</dbReference>
<dbReference type="SUPFAM" id="SSF55186">
    <property type="entry name" value="ThrRS/AlaRS common domain"/>
    <property type="match status" value="1"/>
</dbReference>
<dbReference type="SUPFAM" id="SSF50447">
    <property type="entry name" value="Translation proteins"/>
    <property type="match status" value="1"/>
</dbReference>
<dbReference type="PROSITE" id="PS50860">
    <property type="entry name" value="AA_TRNA_LIGASE_II_ALA"/>
    <property type="match status" value="1"/>
</dbReference>
<reference key="1">
    <citation type="submission" date="2007-05" db="EMBL/GenBank/DDBJ databases">
        <title>Complete sequence of chromosome of Staphylococcus aureus subsp. aureus JH9.</title>
        <authorList>
            <consortium name="US DOE Joint Genome Institute"/>
            <person name="Copeland A."/>
            <person name="Lucas S."/>
            <person name="Lapidus A."/>
            <person name="Barry K."/>
            <person name="Detter J.C."/>
            <person name="Glavina del Rio T."/>
            <person name="Hammon N."/>
            <person name="Israni S."/>
            <person name="Pitluck S."/>
            <person name="Chain P."/>
            <person name="Malfatti S."/>
            <person name="Shin M."/>
            <person name="Vergez L."/>
            <person name="Schmutz J."/>
            <person name="Larimer F."/>
            <person name="Land M."/>
            <person name="Hauser L."/>
            <person name="Kyrpides N."/>
            <person name="Kim E."/>
            <person name="Tomasz A."/>
            <person name="Richardson P."/>
        </authorList>
    </citation>
    <scope>NUCLEOTIDE SEQUENCE [LARGE SCALE GENOMIC DNA]</scope>
    <source>
        <strain>JH9</strain>
    </source>
</reference>
<name>SYA_STAA9</name>
<proteinExistence type="inferred from homology"/>
<comment type="function">
    <text evidence="1">Catalyzes the attachment of alanine to tRNA(Ala) in a two-step reaction: alanine is first activated by ATP to form Ala-AMP and then transferred to the acceptor end of tRNA(Ala). Also edits incorrectly charged Ser-tRNA(Ala) and Gly-tRNA(Ala) via its editing domain.</text>
</comment>
<comment type="catalytic activity">
    <reaction evidence="1">
        <text>tRNA(Ala) + L-alanine + ATP = L-alanyl-tRNA(Ala) + AMP + diphosphate</text>
        <dbReference type="Rhea" id="RHEA:12540"/>
        <dbReference type="Rhea" id="RHEA-COMP:9657"/>
        <dbReference type="Rhea" id="RHEA-COMP:9923"/>
        <dbReference type="ChEBI" id="CHEBI:30616"/>
        <dbReference type="ChEBI" id="CHEBI:33019"/>
        <dbReference type="ChEBI" id="CHEBI:57972"/>
        <dbReference type="ChEBI" id="CHEBI:78442"/>
        <dbReference type="ChEBI" id="CHEBI:78497"/>
        <dbReference type="ChEBI" id="CHEBI:456215"/>
        <dbReference type="EC" id="6.1.1.7"/>
    </reaction>
</comment>
<comment type="cofactor">
    <cofactor evidence="1">
        <name>Zn(2+)</name>
        <dbReference type="ChEBI" id="CHEBI:29105"/>
    </cofactor>
    <text evidence="1">Binds 1 zinc ion per subunit.</text>
</comment>
<comment type="subcellular location">
    <subcellularLocation>
        <location evidence="1">Cytoplasm</location>
    </subcellularLocation>
</comment>
<comment type="domain">
    <text evidence="1">Consists of three domains; the N-terminal catalytic domain, the editing domain and the C-terminal C-Ala domain. The editing domain removes incorrectly charged amino acids, while the C-Ala domain, along with tRNA(Ala), serves as a bridge to cooperatively bring together the editing and aminoacylation centers thus stimulating deacylation of misacylated tRNAs.</text>
</comment>
<comment type="similarity">
    <text evidence="1">Belongs to the class-II aminoacyl-tRNA synthetase family.</text>
</comment>
<feature type="chain" id="PRO_0000347810" description="Alanine--tRNA ligase">
    <location>
        <begin position="1"/>
        <end position="876"/>
    </location>
</feature>
<feature type="binding site" evidence="1">
    <location>
        <position position="565"/>
    </location>
    <ligand>
        <name>Zn(2+)</name>
        <dbReference type="ChEBI" id="CHEBI:29105"/>
    </ligand>
</feature>
<feature type="binding site" evidence="1">
    <location>
        <position position="569"/>
    </location>
    <ligand>
        <name>Zn(2+)</name>
        <dbReference type="ChEBI" id="CHEBI:29105"/>
    </ligand>
</feature>
<feature type="binding site" evidence="1">
    <location>
        <position position="667"/>
    </location>
    <ligand>
        <name>Zn(2+)</name>
        <dbReference type="ChEBI" id="CHEBI:29105"/>
    </ligand>
</feature>
<feature type="binding site" evidence="1">
    <location>
        <position position="671"/>
    </location>
    <ligand>
        <name>Zn(2+)</name>
        <dbReference type="ChEBI" id="CHEBI:29105"/>
    </ligand>
</feature>
<keyword id="KW-0030">Aminoacyl-tRNA synthetase</keyword>
<keyword id="KW-0067">ATP-binding</keyword>
<keyword id="KW-0963">Cytoplasm</keyword>
<keyword id="KW-0436">Ligase</keyword>
<keyword id="KW-0479">Metal-binding</keyword>
<keyword id="KW-0547">Nucleotide-binding</keyword>
<keyword id="KW-0648">Protein biosynthesis</keyword>
<keyword id="KW-0694">RNA-binding</keyword>
<keyword id="KW-0820">tRNA-binding</keyword>
<keyword id="KW-0862">Zinc</keyword>
<sequence length="876" mass="98538">MKKLKASEIRQKYLDFFVEKGHMVEPSAPLVPIDDDTLLWINSGVATLKKYFDGRETPKKPRIVNSQKAIRTNDIENVGFTARHHTFFEMLGNFSIGDYFKQEAIEFAWEFLTSDKWMGMEPDKLYVTIHPEDMEAYNIWHKDIGLEESRIIRIEGNFWDIGEGPSGPNTEIFYDRGEAYGQDDPAEEMYPGGENERYLEVWNLVFSEFNHNKDHSYTPLPNKNIDTGMGLERMASVSQNVRTNYETDLFMPIMNEIEKVSGKQYLVNNEQDVAFKVIADHIRTIAFAISDGALPANEGRGYVLRRLLRRAVRFSQTLGINEPFMYKLVDIVADIMEPYYPNVKEKADFIKRVIKSEEERFHETLEDGLAILNELIKKAKATTNEINGKDAFKLYDTYGFPIELTEEIAVQAGLKVDMTTFESEMQQQRDRARQARQNSQSMQVQSEVLKNITSASTFVGYDTATAQTTLTHLIYNGEEVSQVEAGETVYFMLTETPFYAVSGGQVADTGIVYNDNFEIAVSEVTKAPNGQNLHKGVVQFGQVNVGATVSAEVNQNDRRDIQKNHSATHLLHAALKSVLGDHVNQAGSLVEADRLRFDFSHFGPMTNDEIDQVERLVNEEIWKGIDVNIQEMDIASAKEMGAMALFGEKYGDVVRVVNMAPFSIELCGGIHVRNTSEIGLFKIVSESGTGAGVRRIEALTGKAAFLYLEDIQEKFNTMKSQMKVKSDDQVVEKLTQLQDEEKALLKQLEQRDKEITSLKMGNIEDQVEEINGYKVLVTEVDVPNAKAIRSTMDDFKSKLQDTIIILASNVDDKVSMVATVPKSLTNNVKAGDLIKQMAPIVGGKGGGRPDMAQGGGTQPENISKSLSFIKDYIKNL</sequence>
<gene>
    <name evidence="1" type="primary">alaS</name>
    <name type="ordered locus">SaurJH9_1675</name>
</gene>
<organism>
    <name type="scientific">Staphylococcus aureus (strain JH9)</name>
    <dbReference type="NCBI Taxonomy" id="359786"/>
    <lineage>
        <taxon>Bacteria</taxon>
        <taxon>Bacillati</taxon>
        <taxon>Bacillota</taxon>
        <taxon>Bacilli</taxon>
        <taxon>Bacillales</taxon>
        <taxon>Staphylococcaceae</taxon>
        <taxon>Staphylococcus</taxon>
    </lineage>
</organism>